<accession>C1DRN1</accession>
<dbReference type="EC" id="1.7.1.13" evidence="1"/>
<dbReference type="EMBL" id="CP001157">
    <property type="protein sequence ID" value="ACO77769.1"/>
    <property type="molecule type" value="Genomic_DNA"/>
</dbReference>
<dbReference type="RefSeq" id="WP_012700185.1">
    <property type="nucleotide sequence ID" value="NC_012560.1"/>
</dbReference>
<dbReference type="SMR" id="C1DRN1"/>
<dbReference type="STRING" id="322710.Avin_15540"/>
<dbReference type="EnsemblBacteria" id="ACO77769">
    <property type="protein sequence ID" value="ACO77769"/>
    <property type="gene ID" value="Avin_15540"/>
</dbReference>
<dbReference type="GeneID" id="88184846"/>
<dbReference type="KEGG" id="avn:Avin_15540"/>
<dbReference type="eggNOG" id="COG0780">
    <property type="taxonomic scope" value="Bacteria"/>
</dbReference>
<dbReference type="eggNOG" id="COG2904">
    <property type="taxonomic scope" value="Bacteria"/>
</dbReference>
<dbReference type="HOGENOM" id="CLU_054738_0_0_6"/>
<dbReference type="OrthoDB" id="9789995at2"/>
<dbReference type="UniPathway" id="UPA00392"/>
<dbReference type="Proteomes" id="UP000002424">
    <property type="component" value="Chromosome"/>
</dbReference>
<dbReference type="GO" id="GO:0005737">
    <property type="term" value="C:cytoplasm"/>
    <property type="evidence" value="ECO:0007669"/>
    <property type="project" value="UniProtKB-SubCell"/>
</dbReference>
<dbReference type="GO" id="GO:0033739">
    <property type="term" value="F:preQ1 synthase activity"/>
    <property type="evidence" value="ECO:0007669"/>
    <property type="project" value="UniProtKB-UniRule"/>
</dbReference>
<dbReference type="GO" id="GO:0008616">
    <property type="term" value="P:queuosine biosynthetic process"/>
    <property type="evidence" value="ECO:0007669"/>
    <property type="project" value="UniProtKB-UniRule"/>
</dbReference>
<dbReference type="GO" id="GO:0006400">
    <property type="term" value="P:tRNA modification"/>
    <property type="evidence" value="ECO:0007669"/>
    <property type="project" value="UniProtKB-UniRule"/>
</dbReference>
<dbReference type="Gene3D" id="3.30.1130.10">
    <property type="match status" value="2"/>
</dbReference>
<dbReference type="HAMAP" id="MF_00817">
    <property type="entry name" value="QueF_type2"/>
    <property type="match status" value="1"/>
</dbReference>
<dbReference type="InterPro" id="IPR043133">
    <property type="entry name" value="GTP-CH-I_C/QueF"/>
</dbReference>
<dbReference type="InterPro" id="IPR050084">
    <property type="entry name" value="NADPH_dep_7-cyano-7-deazaG_red"/>
</dbReference>
<dbReference type="InterPro" id="IPR029500">
    <property type="entry name" value="QueF"/>
</dbReference>
<dbReference type="InterPro" id="IPR029139">
    <property type="entry name" value="QueF_N"/>
</dbReference>
<dbReference type="InterPro" id="IPR016428">
    <property type="entry name" value="QueF_type2"/>
</dbReference>
<dbReference type="NCBIfam" id="TIGR03138">
    <property type="entry name" value="QueF"/>
    <property type="match status" value="1"/>
</dbReference>
<dbReference type="PANTHER" id="PTHR34354">
    <property type="entry name" value="NADPH-DEPENDENT 7-CYANO-7-DEAZAGUANINE REDUCTASE"/>
    <property type="match status" value="1"/>
</dbReference>
<dbReference type="PANTHER" id="PTHR34354:SF1">
    <property type="entry name" value="NADPH-DEPENDENT 7-CYANO-7-DEAZAGUANINE REDUCTASE"/>
    <property type="match status" value="1"/>
</dbReference>
<dbReference type="Pfam" id="PF14489">
    <property type="entry name" value="QueF"/>
    <property type="match status" value="1"/>
</dbReference>
<dbReference type="Pfam" id="PF14819">
    <property type="entry name" value="QueF_N"/>
    <property type="match status" value="1"/>
</dbReference>
<dbReference type="PIRSF" id="PIRSF004750">
    <property type="entry name" value="Nitrile_oxidored_YqcD_prd"/>
    <property type="match status" value="1"/>
</dbReference>
<dbReference type="SUPFAM" id="SSF55620">
    <property type="entry name" value="Tetrahydrobiopterin biosynthesis enzymes-like"/>
    <property type="match status" value="1"/>
</dbReference>
<gene>
    <name evidence="1" type="primary">queF</name>
    <name type="ordered locus">Avin_15540</name>
</gene>
<sequence>MHPAAEDSPLGKSSEYLDTYTPSLLFPIPRAPKWAELGLAAENLPYRGVDVWNCYELSWLLPSGKPVVAVGEFVIPADSPNIVESKSFKLYLNSLNQTVFADREALRQTLARDLSAATGAPVAVRLRSLGEVQEQGVAALPGQCIDELDVTIGRYGQPSAELLRCDPARRVEQVLHSHLLKSNCPVTGQPDWGSLVVDYHGPALDPASLLAYVVSFRQHADFHEQCVERIFLDLLRLLEPGRLTVYARYVRRGGLDINPWRSTGAVVADNRRLARQ</sequence>
<comment type="function">
    <text evidence="1">Catalyzes the NADPH-dependent reduction of 7-cyano-7-deazaguanine (preQ0) to 7-aminomethyl-7-deazaguanine (preQ1).</text>
</comment>
<comment type="catalytic activity">
    <reaction evidence="1">
        <text>7-aminomethyl-7-carbaguanine + 2 NADP(+) = 7-cyano-7-deazaguanine + 2 NADPH + 3 H(+)</text>
        <dbReference type="Rhea" id="RHEA:13409"/>
        <dbReference type="ChEBI" id="CHEBI:15378"/>
        <dbReference type="ChEBI" id="CHEBI:45075"/>
        <dbReference type="ChEBI" id="CHEBI:57783"/>
        <dbReference type="ChEBI" id="CHEBI:58349"/>
        <dbReference type="ChEBI" id="CHEBI:58703"/>
        <dbReference type="EC" id="1.7.1.13"/>
    </reaction>
</comment>
<comment type="pathway">
    <text evidence="1">tRNA modification; tRNA-queuosine biosynthesis.</text>
</comment>
<comment type="subunit">
    <text evidence="1">Homodimer.</text>
</comment>
<comment type="subcellular location">
    <subcellularLocation>
        <location evidence="1">Cytoplasm</location>
    </subcellularLocation>
</comment>
<comment type="similarity">
    <text evidence="1">Belongs to the GTP cyclohydrolase I family. QueF type 2 subfamily.</text>
</comment>
<name>QUEF_AZOVD</name>
<protein>
    <recommendedName>
        <fullName evidence="1">NADPH-dependent 7-cyano-7-deazaguanine reductase</fullName>
        <ecNumber evidence="1">1.7.1.13</ecNumber>
    </recommendedName>
    <alternativeName>
        <fullName evidence="1">7-cyano-7-carbaguanine reductase</fullName>
    </alternativeName>
    <alternativeName>
        <fullName evidence="1">NADPH-dependent nitrile oxidoreductase</fullName>
    </alternativeName>
    <alternativeName>
        <fullName evidence="1">PreQ(0) reductase</fullName>
    </alternativeName>
</protein>
<organism>
    <name type="scientific">Azotobacter vinelandii (strain DJ / ATCC BAA-1303)</name>
    <dbReference type="NCBI Taxonomy" id="322710"/>
    <lineage>
        <taxon>Bacteria</taxon>
        <taxon>Pseudomonadati</taxon>
        <taxon>Pseudomonadota</taxon>
        <taxon>Gammaproteobacteria</taxon>
        <taxon>Pseudomonadales</taxon>
        <taxon>Pseudomonadaceae</taxon>
        <taxon>Azotobacter</taxon>
    </lineage>
</organism>
<proteinExistence type="inferred from homology"/>
<reference key="1">
    <citation type="journal article" date="2009" name="J. Bacteriol.">
        <title>Genome sequence of Azotobacter vinelandii, an obligate aerobe specialized to support diverse anaerobic metabolic processes.</title>
        <authorList>
            <person name="Setubal J.C."/>
            <person name="Dos Santos P."/>
            <person name="Goldman B.S."/>
            <person name="Ertesvaag H."/>
            <person name="Espin G."/>
            <person name="Rubio L.M."/>
            <person name="Valla S."/>
            <person name="Almeida N.F."/>
            <person name="Balasubramanian D."/>
            <person name="Cromes L."/>
            <person name="Curatti L."/>
            <person name="Du Z."/>
            <person name="Godsy E."/>
            <person name="Goodner B."/>
            <person name="Hellner-Burris K."/>
            <person name="Hernandez J.A."/>
            <person name="Houmiel K."/>
            <person name="Imperial J."/>
            <person name="Kennedy C."/>
            <person name="Larson T.J."/>
            <person name="Latreille P."/>
            <person name="Ligon L.S."/>
            <person name="Lu J."/>
            <person name="Maerk M."/>
            <person name="Miller N.M."/>
            <person name="Norton S."/>
            <person name="O'Carroll I.P."/>
            <person name="Paulsen I."/>
            <person name="Raulfs E.C."/>
            <person name="Roemer R."/>
            <person name="Rosser J."/>
            <person name="Segura D."/>
            <person name="Slater S."/>
            <person name="Stricklin S.L."/>
            <person name="Studholme D.J."/>
            <person name="Sun J."/>
            <person name="Viana C.J."/>
            <person name="Wallin E."/>
            <person name="Wang B."/>
            <person name="Wheeler C."/>
            <person name="Zhu H."/>
            <person name="Dean D.R."/>
            <person name="Dixon R."/>
            <person name="Wood D."/>
        </authorList>
    </citation>
    <scope>NUCLEOTIDE SEQUENCE [LARGE SCALE GENOMIC DNA]</scope>
    <source>
        <strain>DJ / ATCC BAA-1303</strain>
    </source>
</reference>
<keyword id="KW-0963">Cytoplasm</keyword>
<keyword id="KW-0521">NADP</keyword>
<keyword id="KW-0560">Oxidoreductase</keyword>
<keyword id="KW-0671">Queuosine biosynthesis</keyword>
<evidence type="ECO:0000255" key="1">
    <source>
        <dbReference type="HAMAP-Rule" id="MF_00817"/>
    </source>
</evidence>
<feature type="chain" id="PRO_1000213054" description="NADPH-dependent 7-cyano-7-deazaguanine reductase">
    <location>
        <begin position="1"/>
        <end position="276"/>
    </location>
</feature>
<feature type="active site" description="Thioimide intermediate" evidence="1">
    <location>
        <position position="184"/>
    </location>
</feature>
<feature type="active site" description="Proton donor" evidence="1">
    <location>
        <position position="191"/>
    </location>
</feature>
<feature type="binding site" evidence="1">
    <location>
        <begin position="83"/>
        <end position="85"/>
    </location>
    <ligand>
        <name>substrate</name>
    </ligand>
</feature>
<feature type="binding site" evidence="1">
    <location>
        <begin position="85"/>
        <end position="86"/>
    </location>
    <ligand>
        <name>NADPH</name>
        <dbReference type="ChEBI" id="CHEBI:57783"/>
    </ligand>
</feature>
<feature type="binding site" evidence="1">
    <location>
        <begin position="223"/>
        <end position="224"/>
    </location>
    <ligand>
        <name>substrate</name>
    </ligand>
</feature>
<feature type="binding site" evidence="1">
    <location>
        <begin position="252"/>
        <end position="253"/>
    </location>
    <ligand>
        <name>NADPH</name>
        <dbReference type="ChEBI" id="CHEBI:57783"/>
    </ligand>
</feature>